<name>CAPP_CORGL</name>
<keyword id="KW-0120">Carbon dioxide fixation</keyword>
<keyword id="KW-0903">Direct protein sequencing</keyword>
<keyword id="KW-0456">Lyase</keyword>
<keyword id="KW-0460">Magnesium</keyword>
<keyword id="KW-1185">Reference proteome</keyword>
<evidence type="ECO:0000250" key="1"/>
<evidence type="ECO:0000269" key="2">
    <source>
    </source>
</evidence>
<evidence type="ECO:0000305" key="3"/>
<gene>
    <name type="primary">ppc</name>
    <name type="ordered locus">Cgl1585</name>
    <name type="ordered locus">cg1787</name>
</gene>
<comment type="function">
    <text>Forms oxaloacetate, a four-carbon dicarboxylic acid source for the tricarboxylic acid cycle.</text>
</comment>
<comment type="catalytic activity">
    <reaction>
        <text>oxaloacetate + phosphate = phosphoenolpyruvate + hydrogencarbonate</text>
        <dbReference type="Rhea" id="RHEA:28370"/>
        <dbReference type="ChEBI" id="CHEBI:16452"/>
        <dbReference type="ChEBI" id="CHEBI:17544"/>
        <dbReference type="ChEBI" id="CHEBI:43474"/>
        <dbReference type="ChEBI" id="CHEBI:58702"/>
        <dbReference type="EC" id="4.1.1.31"/>
    </reaction>
</comment>
<comment type="cofactor">
    <cofactor evidence="1">
        <name>Mg(2+)</name>
        <dbReference type="ChEBI" id="CHEBI:18420"/>
    </cofactor>
</comment>
<comment type="activity regulation">
    <text>Activity not stimulated by acetyl-CoA in the absence of any allosteric inhibitor, while the corresponding protein from E.coli is strongly stimulated.</text>
</comment>
<comment type="similarity">
    <text evidence="3">Belongs to the PEPCase type 1 family.</text>
</comment>
<sequence length="919" mass="103198">MTDFLRDDIRFLGQILGEVIAEQEGQEVYELVEQARLTSFDIAKGNAEMDSLVQVFDGITPAKATPIARAFSHFALLANLAEDLYDEELREQALDAGDTPPDSTLDATWLKLNEGNVGAEAVADVLRNAEVAPVLTAHPTETRRRTVFDAQKWITTHMRERHALQSAEPTARTQSKLDEIEKNIRRRITILWQTALIRVARPRIEDEIEVGLRYYKLSLLEEIPRINRDVAVELRERFGEGVPLKPVVKPGSWIGGDHDGNPYVTAETVEYSTHRAAETVLKYYARQLHSLEHELSLSDRMNKVTPQLLALADAGHNDVPSRVDEPYRRAVHGVRGRILATTAELIGEDAVEGVWFKVFTPYASPEEFLNDALTIDHSLRESKDVLIADDRLSVLISAIESFGFNLYALDLRQNSESYEDVLTELFERAQVTANYRELSEAEKLEVLLKELRSPRPLIPHGSDEYSEVTDRELGIFRTASEAVKKFGPRMVPHCIISMASSVTDVLEPMVLLKEFGLIAANGDNPRGTVDVIPLFETIEDLQAGAGILDELWKIDLYRNYLLQRDNVQEVMLGYSDSNKDGGYFSANWALYDAELQLVELCRSAGVKLRLFHGRGGTVGRGGGPSYDAILAQPRGAVQGSVRITEQGEIISAKYGNPETARRNLEALVSATLEASLLDVSELTDHQRAYDIMSEISELSLKKYASLVHEDQGFIDYFTQSTPLQEIGSLNIGSRPSSRKQTSSVEDLRAIPWVLSWSQSRVMLPGWFGVGTALEQWIGEGEQATQRIAELQTLNESWPFFTSVLDNMAQVMSKAELRLAKLYADLIPDTEVAERVYSVIREEYFLTKKMFCVITGSDDLLDDNPLLARSVQRRYPYLLPLNVIQVEMMRRYRKGDQSEQVSRNIQLTMNGLSTALRNSG</sequence>
<reference key="1">
    <citation type="journal article" date="1989" name="Mol. Gen. Genet.">
        <title>The phosphoenolpyruvate carboxylase gene of Corynebacterium glutamicum: molecular cloning, nucleotide sequence, and expression.</title>
        <authorList>
            <person name="Eikmanns B.J."/>
            <person name="Follettie M.T."/>
            <person name="Griot M.U."/>
            <person name="Sinskey A.J."/>
        </authorList>
    </citation>
    <scope>NUCLEOTIDE SEQUENCE [GENOMIC DNA]</scope>
    <source>
        <strain>ATCC 13059 / LMG 3658 / NCIB 10332 / AS019 / 613</strain>
    </source>
</reference>
<reference key="2">
    <citation type="journal article" date="1989" name="Gene">
        <title>Cloning and nucleotide sequence of the phosphoenolpyruvate carboxylase-coding gene of Corynebacterium glutamicum ATCC13032.</title>
        <authorList>
            <person name="O'Regan M."/>
            <person name="Thierbach G."/>
            <person name="Bachmann B."/>
            <person name="Villeval D."/>
            <person name="Lepage P."/>
            <person name="Viret J.F."/>
            <person name="Lemoine Y."/>
        </authorList>
    </citation>
    <scope>NUCLEOTIDE SEQUENCE [GENOMIC DNA]</scope>
    <scope>PROTEIN SEQUENCE OF 2-16</scope>
    <source>
        <strain>ATCC 13032 / DSM 20300 / JCM 1318 / BCRC 11384 / CCUG 27702 / LMG 3730 / NBRC 12168 / NCIMB 10025 / NRRL B-2784 / 534</strain>
    </source>
</reference>
<reference key="3">
    <citation type="journal article" date="2003" name="Appl. Microbiol. Biotechnol.">
        <title>The Corynebacterium glutamicum genome: features and impacts on biotechnological processes.</title>
        <authorList>
            <person name="Ikeda M."/>
            <person name="Nakagawa S."/>
        </authorList>
    </citation>
    <scope>NUCLEOTIDE SEQUENCE [LARGE SCALE GENOMIC DNA]</scope>
    <source>
        <strain>ATCC 13032 / DSM 20300 / JCM 1318 / BCRC 11384 / CCUG 27702 / LMG 3730 / NBRC 12168 / NCIMB 10025 / NRRL B-2784 / 534</strain>
    </source>
</reference>
<reference key="4">
    <citation type="journal article" date="2003" name="J. Biotechnol.">
        <title>The complete Corynebacterium glutamicum ATCC 13032 genome sequence and its impact on the production of L-aspartate-derived amino acids and vitamins.</title>
        <authorList>
            <person name="Kalinowski J."/>
            <person name="Bathe B."/>
            <person name="Bartels D."/>
            <person name="Bischoff N."/>
            <person name="Bott M."/>
            <person name="Burkovski A."/>
            <person name="Dusch N."/>
            <person name="Eggeling L."/>
            <person name="Eikmanns B.J."/>
            <person name="Gaigalat L."/>
            <person name="Goesmann A."/>
            <person name="Hartmann M."/>
            <person name="Huthmacher K."/>
            <person name="Kraemer R."/>
            <person name="Linke B."/>
            <person name="McHardy A.C."/>
            <person name="Meyer F."/>
            <person name="Moeckel B."/>
            <person name="Pfefferle W."/>
            <person name="Puehler A."/>
            <person name="Rey D.A."/>
            <person name="Rueckert C."/>
            <person name="Rupp O."/>
            <person name="Sahm H."/>
            <person name="Wendisch V.F."/>
            <person name="Wiegraebe I."/>
            <person name="Tauch A."/>
        </authorList>
    </citation>
    <scope>NUCLEOTIDE SEQUENCE [LARGE SCALE GENOMIC DNA]</scope>
    <source>
        <strain>ATCC 13032 / DSM 20300 / JCM 1318 / BCRC 11384 / CCUG 27702 / LMG 3730 / NBRC 12168 / NCIMB 10025 / NRRL B-2784 / 534</strain>
    </source>
</reference>
<organism>
    <name type="scientific">Corynebacterium glutamicum (strain ATCC 13032 / DSM 20300 / JCM 1318 / BCRC 11384 / CCUG 27702 / LMG 3730 / NBRC 12168 / NCIMB 10025 / NRRL B-2784 / 534)</name>
    <dbReference type="NCBI Taxonomy" id="196627"/>
    <lineage>
        <taxon>Bacteria</taxon>
        <taxon>Bacillati</taxon>
        <taxon>Actinomycetota</taxon>
        <taxon>Actinomycetes</taxon>
        <taxon>Mycobacteriales</taxon>
        <taxon>Corynebacteriaceae</taxon>
        <taxon>Corynebacterium</taxon>
    </lineage>
</organism>
<dbReference type="EC" id="4.1.1.31"/>
<dbReference type="EMBL" id="X14234">
    <property type="protein sequence ID" value="CAA32450.1"/>
    <property type="molecule type" value="Genomic_DNA"/>
</dbReference>
<dbReference type="EMBL" id="M25819">
    <property type="protein sequence ID" value="AAA83537.1"/>
    <property type="molecule type" value="Genomic_DNA"/>
</dbReference>
<dbReference type="EMBL" id="BA000036">
    <property type="protein sequence ID" value="BAB98978.1"/>
    <property type="molecule type" value="Genomic_DNA"/>
</dbReference>
<dbReference type="EMBL" id="BX927152">
    <property type="protein sequence ID" value="CAF21593.1"/>
    <property type="molecule type" value="Genomic_DNA"/>
</dbReference>
<dbReference type="PIR" id="S05512">
    <property type="entry name" value="QYFKG"/>
</dbReference>
<dbReference type="RefSeq" id="NP_600799.1">
    <property type="nucleotide sequence ID" value="NC_003450.3"/>
</dbReference>
<dbReference type="RefSeq" id="WP_011014465.1">
    <property type="nucleotide sequence ID" value="NC_006958.1"/>
</dbReference>
<dbReference type="SMR" id="P12880"/>
<dbReference type="STRING" id="196627.cg1787"/>
<dbReference type="GeneID" id="1019553"/>
<dbReference type="KEGG" id="cgb:cg1787"/>
<dbReference type="KEGG" id="cgl:Cgl1585"/>
<dbReference type="PATRIC" id="fig|196627.13.peg.1546"/>
<dbReference type="eggNOG" id="COG2352">
    <property type="taxonomic scope" value="Bacteria"/>
</dbReference>
<dbReference type="HOGENOM" id="CLU_006557_2_0_11"/>
<dbReference type="OrthoDB" id="9768133at2"/>
<dbReference type="BioCyc" id="CORYNE:G18NG-11170-MONOMER"/>
<dbReference type="BRENDA" id="4.1.1.31">
    <property type="organism ID" value="960"/>
</dbReference>
<dbReference type="Proteomes" id="UP000000582">
    <property type="component" value="Chromosome"/>
</dbReference>
<dbReference type="Proteomes" id="UP000001009">
    <property type="component" value="Chromosome"/>
</dbReference>
<dbReference type="GO" id="GO:0005829">
    <property type="term" value="C:cytosol"/>
    <property type="evidence" value="ECO:0007669"/>
    <property type="project" value="TreeGrafter"/>
</dbReference>
<dbReference type="GO" id="GO:0000287">
    <property type="term" value="F:magnesium ion binding"/>
    <property type="evidence" value="ECO:0007669"/>
    <property type="project" value="UniProtKB-UniRule"/>
</dbReference>
<dbReference type="GO" id="GO:0008964">
    <property type="term" value="F:phosphoenolpyruvate carboxylase activity"/>
    <property type="evidence" value="ECO:0007669"/>
    <property type="project" value="UniProtKB-UniRule"/>
</dbReference>
<dbReference type="GO" id="GO:0015977">
    <property type="term" value="P:carbon fixation"/>
    <property type="evidence" value="ECO:0007669"/>
    <property type="project" value="UniProtKB-UniRule"/>
</dbReference>
<dbReference type="GO" id="GO:0006107">
    <property type="term" value="P:oxaloacetate metabolic process"/>
    <property type="evidence" value="ECO:0007669"/>
    <property type="project" value="UniProtKB-UniRule"/>
</dbReference>
<dbReference type="GO" id="GO:0006099">
    <property type="term" value="P:tricarboxylic acid cycle"/>
    <property type="evidence" value="ECO:0007669"/>
    <property type="project" value="InterPro"/>
</dbReference>
<dbReference type="Gene3D" id="1.20.1440.90">
    <property type="entry name" value="Phosphoenolpyruvate/pyruvate domain"/>
    <property type="match status" value="1"/>
</dbReference>
<dbReference type="HAMAP" id="MF_00595">
    <property type="entry name" value="PEPcase_type1"/>
    <property type="match status" value="1"/>
</dbReference>
<dbReference type="InterPro" id="IPR021135">
    <property type="entry name" value="PEP_COase"/>
</dbReference>
<dbReference type="InterPro" id="IPR022805">
    <property type="entry name" value="PEP_COase_bac/pln-type"/>
</dbReference>
<dbReference type="InterPro" id="IPR018129">
    <property type="entry name" value="PEP_COase_Lys_AS"/>
</dbReference>
<dbReference type="InterPro" id="IPR033129">
    <property type="entry name" value="PEPCASE_His_AS"/>
</dbReference>
<dbReference type="InterPro" id="IPR015813">
    <property type="entry name" value="Pyrv/PenolPyrv_kinase-like_dom"/>
</dbReference>
<dbReference type="NCBIfam" id="NF000584">
    <property type="entry name" value="PRK00009.1"/>
    <property type="match status" value="1"/>
</dbReference>
<dbReference type="PANTHER" id="PTHR30523">
    <property type="entry name" value="PHOSPHOENOLPYRUVATE CARBOXYLASE"/>
    <property type="match status" value="1"/>
</dbReference>
<dbReference type="PANTHER" id="PTHR30523:SF6">
    <property type="entry name" value="PHOSPHOENOLPYRUVATE CARBOXYLASE"/>
    <property type="match status" value="1"/>
</dbReference>
<dbReference type="Pfam" id="PF00311">
    <property type="entry name" value="PEPcase"/>
    <property type="match status" value="1"/>
</dbReference>
<dbReference type="PRINTS" id="PR00150">
    <property type="entry name" value="PEPCARBXLASE"/>
</dbReference>
<dbReference type="SUPFAM" id="SSF51621">
    <property type="entry name" value="Phosphoenolpyruvate/pyruvate domain"/>
    <property type="match status" value="1"/>
</dbReference>
<dbReference type="PROSITE" id="PS00781">
    <property type="entry name" value="PEPCASE_1"/>
    <property type="match status" value="1"/>
</dbReference>
<dbReference type="PROSITE" id="PS00393">
    <property type="entry name" value="PEPCASE_2"/>
    <property type="match status" value="1"/>
</dbReference>
<accession>P12880</accession>
<feature type="initiator methionine" description="Removed" evidence="2">
    <location>
        <position position="1"/>
    </location>
</feature>
<feature type="chain" id="PRO_0000166591" description="Phosphoenolpyruvate carboxylase">
    <location>
        <begin position="2"/>
        <end position="919"/>
    </location>
</feature>
<feature type="active site" evidence="1">
    <location>
        <position position="138"/>
    </location>
</feature>
<feature type="active site" evidence="1">
    <location>
        <position position="579"/>
    </location>
</feature>
<feature type="sequence conflict" description="In Ref. 1; CAA32450." evidence="3" ref="1">
    <original>KL</original>
    <variation>NV</variation>
    <location>
        <begin position="607"/>
        <end position="608"/>
    </location>
</feature>
<feature type="sequence conflict" description="In Ref. 1; CAA32450." evidence="3" ref="1">
    <original>FT</original>
    <variation>LP</variation>
    <location>
        <begin position="800"/>
        <end position="801"/>
    </location>
</feature>
<feature type="sequence conflict" description="In Ref. 1; CAA32450." evidence="3" ref="1">
    <original>L</original>
    <variation>V</variation>
    <location>
        <position position="915"/>
    </location>
</feature>
<proteinExistence type="evidence at protein level"/>
<protein>
    <recommendedName>
        <fullName>Phosphoenolpyruvate carboxylase</fullName>
        <shortName>PEPC</shortName>
        <shortName>PEPCase</shortName>
        <ecNumber>4.1.1.31</ecNumber>
    </recommendedName>
</protein>